<organism>
    <name type="scientific">Saccharomyces cerevisiae (strain ATCC 204508 / S288c)</name>
    <name type="common">Baker's yeast</name>
    <dbReference type="NCBI Taxonomy" id="559292"/>
    <lineage>
        <taxon>Eukaryota</taxon>
        <taxon>Fungi</taxon>
        <taxon>Dikarya</taxon>
        <taxon>Ascomycota</taxon>
        <taxon>Saccharomycotina</taxon>
        <taxon>Saccharomycetes</taxon>
        <taxon>Saccharomycetales</taxon>
        <taxon>Saccharomycetaceae</taxon>
        <taxon>Saccharomyces</taxon>
    </lineage>
</organism>
<dbReference type="EMBL" id="Z71448">
    <property type="protein sequence ID" value="CAA96062.1"/>
    <property type="molecule type" value="Genomic_DNA"/>
</dbReference>
<dbReference type="PIR" id="S63125">
    <property type="entry name" value="S63125"/>
</dbReference>
<dbReference type="STRING" id="4932.YNL170W"/>
<dbReference type="PaxDb" id="4932-YNL170W"/>
<dbReference type="EnsemblFungi" id="YNL170W_mRNA">
    <property type="protein sequence ID" value="YNL170W"/>
    <property type="gene ID" value="YNL170W"/>
</dbReference>
<dbReference type="AGR" id="SGD:S000005114"/>
<dbReference type="SGD" id="S000005114">
    <property type="gene designation" value="YNL170W"/>
</dbReference>
<dbReference type="HOGENOM" id="CLU_1929228_0_0_1"/>
<evidence type="ECO:0000305" key="1"/>
<evidence type="ECO:0000305" key="2">
    <source>
    </source>
</evidence>
<accession>P53888</accession>
<gene>
    <name type="ordered locus">YNL170W</name>
    <name type="ORF">N1688</name>
</gene>
<name>YNR0_YEAST</name>
<comment type="miscellaneous">
    <text evidence="1">Partially overlaps PSD1.</text>
</comment>
<comment type="caution">
    <text evidence="2">Product of a dubious gene prediction unlikely to encode a functional protein. Because of that it is not part of the S.cerevisiae S288c complete/reference proteome set.</text>
</comment>
<reference key="1">
    <citation type="journal article" date="1997" name="Nature">
        <title>The nucleotide sequence of Saccharomyces cerevisiae chromosome XIV and its evolutionary implications.</title>
        <authorList>
            <person name="Philippsen P."/>
            <person name="Kleine K."/>
            <person name="Poehlmann R."/>
            <person name="Duesterhoeft A."/>
            <person name="Hamberg K."/>
            <person name="Hegemann J.H."/>
            <person name="Obermaier B."/>
            <person name="Urrestarazu L.A."/>
            <person name="Aert R."/>
            <person name="Albermann K."/>
            <person name="Altmann R."/>
            <person name="Andre B."/>
            <person name="Baladron V."/>
            <person name="Ballesta J.P.G."/>
            <person name="Becam A.-M."/>
            <person name="Beinhauer J.D."/>
            <person name="Boskovic J."/>
            <person name="Buitrago M.J."/>
            <person name="Bussereau F."/>
            <person name="Coster F."/>
            <person name="Crouzet M."/>
            <person name="D'Angelo M."/>
            <person name="Dal Pero F."/>
            <person name="De Antoni A."/>
            <person name="del Rey F."/>
            <person name="Doignon F."/>
            <person name="Domdey H."/>
            <person name="Dubois E."/>
            <person name="Fiedler T.A."/>
            <person name="Fleig U."/>
            <person name="Floeth M."/>
            <person name="Fritz C."/>
            <person name="Gaillardin C."/>
            <person name="Garcia-Cantalejo J.M."/>
            <person name="Glansdorff N."/>
            <person name="Goffeau A."/>
            <person name="Gueldener U."/>
            <person name="Herbert C.J."/>
            <person name="Heumann K."/>
            <person name="Heuss-Neitzel D."/>
            <person name="Hilbert H."/>
            <person name="Hinni K."/>
            <person name="Iraqui Houssaini I."/>
            <person name="Jacquet M."/>
            <person name="Jimenez A."/>
            <person name="Jonniaux J.-L."/>
            <person name="Karpfinger-Hartl L."/>
            <person name="Lanfranchi G."/>
            <person name="Lepingle A."/>
            <person name="Levesque H."/>
            <person name="Lyck R."/>
            <person name="Maftahi M."/>
            <person name="Mallet L."/>
            <person name="Maurer C.T.C."/>
            <person name="Messenguy F."/>
            <person name="Mewes H.-W."/>
            <person name="Moestl D."/>
            <person name="Nasr F."/>
            <person name="Nicaud J.-M."/>
            <person name="Niedenthal R.K."/>
            <person name="Pandolfo D."/>
            <person name="Pierard A."/>
            <person name="Piravandi E."/>
            <person name="Planta R.J."/>
            <person name="Pohl T.M."/>
            <person name="Purnelle B."/>
            <person name="Rebischung C."/>
            <person name="Remacha M.A."/>
            <person name="Revuelta J.L."/>
            <person name="Rinke M."/>
            <person name="Saiz J.E."/>
            <person name="Sartorello F."/>
            <person name="Scherens B."/>
            <person name="Sen-Gupta M."/>
            <person name="Soler-Mira A."/>
            <person name="Urbanus J.H.M."/>
            <person name="Valle G."/>
            <person name="Van Dyck L."/>
            <person name="Verhasselt P."/>
            <person name="Vierendeels F."/>
            <person name="Vissers S."/>
            <person name="Voet M."/>
            <person name="Volckaert G."/>
            <person name="Wach A."/>
            <person name="Wambutt R."/>
            <person name="Wedler H."/>
            <person name="Zollner A."/>
            <person name="Hani J."/>
        </authorList>
    </citation>
    <scope>NUCLEOTIDE SEQUENCE [LARGE SCALE GENOMIC DNA]</scope>
    <source>
        <strain>ATCC 204508 / S288c</strain>
    </source>
</reference>
<reference key="2">
    <citation type="journal article" date="2014" name="G3 (Bethesda)">
        <title>The reference genome sequence of Saccharomyces cerevisiae: Then and now.</title>
        <authorList>
            <person name="Engel S.R."/>
            <person name="Dietrich F.S."/>
            <person name="Fisk D.G."/>
            <person name="Binkley G."/>
            <person name="Balakrishnan R."/>
            <person name="Costanzo M.C."/>
            <person name="Dwight S.S."/>
            <person name="Hitz B.C."/>
            <person name="Karra K."/>
            <person name="Nash R.S."/>
            <person name="Weng S."/>
            <person name="Wong E.D."/>
            <person name="Lloyd P."/>
            <person name="Skrzypek M.S."/>
            <person name="Miyasato S.R."/>
            <person name="Simison M."/>
            <person name="Cherry J.M."/>
        </authorList>
    </citation>
    <scope>GENOME REANNOTATION</scope>
    <source>
        <strain>ATCC 204508 / S288c</strain>
    </source>
</reference>
<protein>
    <recommendedName>
        <fullName>Putative uncharacterized protein YNL170W</fullName>
    </recommendedName>
</protein>
<feature type="chain" id="PRO_0000203410" description="Putative uncharacterized protein YNL170W">
    <location>
        <begin position="1"/>
        <end position="131"/>
    </location>
</feature>
<proteinExistence type="uncertain"/>
<sequence length="131" mass="14681">MKGVHDMAKILQTNIFNLKFTSNKSNLKNVQRIILHTSKRRIKSKCADNTIYSKINANFTYDCFHFKSFFPIMPNFCPILTLSPTLTSNLNSVGASKQSTTVLPNSKPPISSPLTKGIPPNILLAFSYTAW</sequence>